<name>SGS_BPT7</name>
<evidence type="ECO:0000269" key="1">
    <source>
    </source>
</evidence>
<organismHost>
    <name type="scientific">Escherichia coli</name>
    <dbReference type="NCBI Taxonomy" id="562"/>
</organismHost>
<keyword id="KW-1185">Reference proteome</keyword>
<keyword id="KW-0688">Ribosomal frameshifting</keyword>
<proteinExistence type="evidence at protein level"/>
<accession>P0DJY3</accession>
<dbReference type="EMBL" id="V01146">
    <property type="status" value="NOT_ANNOTATED_CDS"/>
    <property type="molecule type" value="Genomic_DNA"/>
</dbReference>
<dbReference type="RefSeq" id="NP_041985.1">
    <molecule id="P0DJY3-1"/>
    <property type="nucleotide sequence ID" value="NC_001604.1"/>
</dbReference>
<dbReference type="KEGG" id="vg:1261038"/>
<dbReference type="OrthoDB" id="16719at10239"/>
<dbReference type="Proteomes" id="UP000000840">
    <property type="component" value="Genome"/>
</dbReference>
<dbReference type="GO" id="GO:0075523">
    <property type="term" value="P:viral translational frameshifting"/>
    <property type="evidence" value="ECO:0007669"/>
    <property type="project" value="UniProtKB-KW"/>
</dbReference>
<dbReference type="InterPro" id="IPR022611">
    <property type="entry name" value="Phage_T7_5.5"/>
</dbReference>
<dbReference type="Pfam" id="PF11247">
    <property type="entry name" value="Phage_T7_55"/>
    <property type="match status" value="1"/>
</dbReference>
<sequence length="99" mass="11206">MAMTKKFKVSFDVTAKMSSDVQAILEKDMLHLCKQVGSGAIVPNGKQKEMIVQFLTHGMEGLMTFVVRTSFREAIKDMHEEYADKDSFKQSPATVREVF</sequence>
<organism>
    <name type="scientific">Escherichia phage T7</name>
    <name type="common">Bacteriophage T7</name>
    <dbReference type="NCBI Taxonomy" id="10760"/>
    <lineage>
        <taxon>Viruses</taxon>
        <taxon>Duplodnaviria</taxon>
        <taxon>Heunggongvirae</taxon>
        <taxon>Uroviricota</taxon>
        <taxon>Caudoviricetes</taxon>
        <taxon>Autographiviridae</taxon>
        <taxon>Studiervirinae</taxon>
        <taxon>Teseptimavirus</taxon>
        <taxon>Teseptimavirus T7</taxon>
    </lineage>
</organism>
<gene>
    <name type="ordered locus">5.5</name>
</gene>
<protein>
    <recommendedName>
        <fullName>Protein suppressor of silencing</fullName>
    </recommendedName>
    <alternativeName>
        <fullName>Gene product 5.5</fullName>
    </alternativeName>
</protein>
<comment type="function">
    <text evidence="1">Plays a role in the inhibition of gene silencing by the host nucleoid-associated protein H-NS/hns. Disrupts higher-order H-NS-DNA complexes.</text>
</comment>
<comment type="alternative products">
    <event type="ribosomal frameshifting"/>
    <isoform>
        <id>P0DJY3-1</id>
        <name>2</name>
        <name>Protein suppressor of silencing</name>
        <sequence type="displayed"/>
    </isoform>
    <isoform>
        <id>P03787-1</id>
        <name>1</name>
        <name>Fusion protein 5.5/5.7</name>
        <sequence type="external"/>
    </isoform>
</comment>
<feature type="chain" id="PRO_0000425444" description="Protein suppressor of silencing">
    <location>
        <begin position="1"/>
        <end position="99"/>
    </location>
</feature>
<reference key="1">
    <citation type="journal article" date="1983" name="J. Mol. Biol.">
        <title>Complete nucleotide sequence of bacteriophage T7 DNA and the locations of T7 genetic elements.</title>
        <authorList>
            <person name="Dunn J.J."/>
            <person name="Studier F.W."/>
        </authorList>
    </citation>
    <scope>NUCLEOTIDE SEQUENCE [LARGE SCALE GENOMIC DNA]</scope>
</reference>
<reference key="2">
    <citation type="submission" date="1993-11" db="EMBL/GenBank/DDBJ databases">
        <authorList>
            <person name="Dunn J.J."/>
            <person name="Studier F.W."/>
        </authorList>
    </citation>
    <scope>SEQUENCE REVISION</scope>
</reference>
<reference key="3">
    <citation type="journal article" date="2011" name="J. Bacteriol.">
        <title>The 5.5 protein of phage T7 inhibits H-NS through interactions with the central oligomerization domain.</title>
        <authorList>
            <person name="Ali S.S."/>
            <person name="Beckett E."/>
            <person name="Bae S.J."/>
            <person name="Navarre W.W."/>
        </authorList>
    </citation>
    <scope>FUNCTION</scope>
    <scope>INTERACTION WITH HOST HNS</scope>
</reference>